<accession>Q8JHE9</accession>
<reference key="1">
    <citation type="journal article" date="2002" name="Dev. Cell">
        <title>aph-1 and pen-2 are required for Notch pathway signaling, gamma-secretase cleavage of betaAPP, and presenilin protein accumulation.</title>
        <authorList>
            <person name="Francis R."/>
            <person name="McGrath G."/>
            <person name="Zhang J."/>
            <person name="Ruddy D.A."/>
            <person name="Sym M."/>
            <person name="Apfeld J."/>
            <person name="Nicoll M."/>
            <person name="Maxwell M."/>
            <person name="Hai B."/>
            <person name="Ellis M.C."/>
            <person name="Parks A.L."/>
            <person name="Xu W."/>
            <person name="Li J."/>
            <person name="Gurney M."/>
            <person name="Myers R.L."/>
            <person name="Himes C.S."/>
            <person name="Hiebsch R."/>
            <person name="Ruble C."/>
            <person name="Nye J.S."/>
            <person name="Curtis D."/>
        </authorList>
    </citation>
    <scope>NUCLEOTIDE SEQUENCE [MRNA]</scope>
</reference>
<reference key="2">
    <citation type="journal article" date="2004" name="Proc. Natl. Acad. Sci. U.S.A.">
        <title>Hematopoietic gene expression profile in zebrafish kidney marrow.</title>
        <authorList>
            <person name="Song H.-D."/>
            <person name="Sun X.-J."/>
            <person name="Deng M."/>
            <person name="Zhang G.-W."/>
            <person name="Zhou Y."/>
            <person name="Wu X.-Y."/>
            <person name="Sheng Y."/>
            <person name="Chen Y."/>
            <person name="Ruan Z."/>
            <person name="Jiang C.-L."/>
            <person name="Fan H.-Y."/>
            <person name="Zon L.I."/>
            <person name="Kanki J.P."/>
            <person name="Liu T.X."/>
            <person name="Look A.T."/>
            <person name="Chen Z."/>
        </authorList>
    </citation>
    <scope>NUCLEOTIDE SEQUENCE [LARGE SCALE MRNA]</scope>
    <source>
        <tissue>Kidney marrow</tissue>
    </source>
</reference>
<reference key="3">
    <citation type="submission" date="2004-06" db="EMBL/GenBank/DDBJ databases">
        <authorList>
            <consortium name="NIH - Zebrafish Gene Collection (ZGC) project"/>
        </authorList>
    </citation>
    <scope>NUCLEOTIDE SEQUENCE [LARGE SCALE MRNA]</scope>
    <source>
        <tissue>Embryo</tissue>
    </source>
</reference>
<protein>
    <recommendedName>
        <fullName>Gamma-secretase subunit Aph-1b</fullName>
    </recommendedName>
    <alternativeName>
        <fullName>Anterior-pharynx-defective protein 1b</fullName>
    </alternativeName>
</protein>
<gene>
    <name type="primary">aph1b</name>
    <name type="synonym">psfl</name>
</gene>
<proteinExistence type="evidence at transcript level"/>
<comment type="function">
    <text evidence="1">Essential subunit of the gamma-secretase complex, an endoprotease complex that catalyzes the intramembrane cleavage of integral proteins such as Notch receptors. It may represent a stabilizing cofactor for the presenilin homodimer that promotes the formation of a stable complex (By similarity).</text>
</comment>
<comment type="subunit">
    <text evidence="3">Component of the gamma-secretase complex, a complex composed of a presenilin homodimer (PSEN1 or PSEN2), nicastrin (NCSTN), APH1 and PEN2.</text>
</comment>
<comment type="subcellular location">
    <subcellularLocation>
        <location evidence="3">Membrane</location>
        <topology evidence="3">Multi-pass membrane protein</topology>
    </subcellularLocation>
</comment>
<comment type="similarity">
    <text evidence="3">Belongs to the APH-1 family.</text>
</comment>
<evidence type="ECO:0000250" key="1"/>
<evidence type="ECO:0000255" key="2"/>
<evidence type="ECO:0000305" key="3"/>
<feature type="chain" id="PRO_0000221056" description="Gamma-secretase subunit Aph-1b">
    <location>
        <begin position="1"/>
        <end position="258"/>
    </location>
</feature>
<feature type="transmembrane region" description="Helical; Name=1" evidence="2">
    <location>
        <begin position="3"/>
        <end position="23"/>
    </location>
</feature>
<feature type="transmembrane region" description="Helical; Name=2" evidence="2">
    <location>
        <begin position="32"/>
        <end position="52"/>
    </location>
</feature>
<feature type="transmembrane region" description="Helical; Name=3" evidence="2">
    <location>
        <begin position="70"/>
        <end position="90"/>
    </location>
</feature>
<feature type="transmembrane region" description="Helical; Name=4" evidence="2">
    <location>
        <begin position="118"/>
        <end position="138"/>
    </location>
</feature>
<feature type="transmembrane region" description="Helical; Name=5" evidence="2">
    <location>
        <begin position="161"/>
        <end position="181"/>
    </location>
</feature>
<feature type="transmembrane region" description="Helical; Name=6" evidence="2">
    <location>
        <begin position="187"/>
        <end position="207"/>
    </location>
</feature>
<feature type="transmembrane region" description="Helical; Name=7" evidence="2">
    <location>
        <begin position="214"/>
        <end position="234"/>
    </location>
</feature>
<sequence>MTVAVFFGCTFIAFGPAIALFMFTIARDPLRVIFLIAGAFFWLVSLLLSSLVWFITVQISNKNSATQQRGLLIFGVVLSVLLQEAFRYGYYRLLKKANEGLLALSQEDTMPISMRQLAYVSGLGFGFMSGAFSVVNILSDSLGPGTVGIHGESQHYFISSAFMTLAIILLHMFWGVVFFEACERQRWWALGAVVASHLVVSCLTFVNPHYQGSLIPTYIILSVMAVWAYLCAGGSLRNLKLCLTCKDKDFLLANHRPR</sequence>
<organism>
    <name type="scientific">Danio rerio</name>
    <name type="common">Zebrafish</name>
    <name type="synonym">Brachydanio rerio</name>
    <dbReference type="NCBI Taxonomy" id="7955"/>
    <lineage>
        <taxon>Eukaryota</taxon>
        <taxon>Metazoa</taxon>
        <taxon>Chordata</taxon>
        <taxon>Craniata</taxon>
        <taxon>Vertebrata</taxon>
        <taxon>Euteleostomi</taxon>
        <taxon>Actinopterygii</taxon>
        <taxon>Neopterygii</taxon>
        <taxon>Teleostei</taxon>
        <taxon>Ostariophysi</taxon>
        <taxon>Cypriniformes</taxon>
        <taxon>Danionidae</taxon>
        <taxon>Danioninae</taxon>
        <taxon>Danio</taxon>
    </lineage>
</organism>
<dbReference type="EMBL" id="AF512428">
    <property type="protein sequence ID" value="AAM88325.1"/>
    <property type="molecule type" value="mRNA"/>
</dbReference>
<dbReference type="EMBL" id="AY423036">
    <property type="protein sequence ID" value="AAQ98012.1"/>
    <property type="molecule type" value="mRNA"/>
</dbReference>
<dbReference type="EMBL" id="BC071492">
    <property type="protein sequence ID" value="AAH71492.1"/>
    <property type="molecule type" value="mRNA"/>
</dbReference>
<dbReference type="RefSeq" id="NP_956409.1">
    <property type="nucleotide sequence ID" value="NM_200115.1"/>
</dbReference>
<dbReference type="SMR" id="Q8JHE9"/>
<dbReference type="FunCoup" id="Q8JHE9">
    <property type="interactions" value="1679"/>
</dbReference>
<dbReference type="STRING" id="7955.ENSDARP00000011743"/>
<dbReference type="PaxDb" id="7955-ENSDARP00000011743"/>
<dbReference type="Ensembl" id="ENSDART00000008096">
    <property type="protein sequence ID" value="ENSDARP00000011743"/>
    <property type="gene ID" value="ENSDARG00000005612"/>
</dbReference>
<dbReference type="Ensembl" id="ENSDART00000191853">
    <property type="protein sequence ID" value="ENSDARP00000149060"/>
    <property type="gene ID" value="ENSDARG00000111794"/>
</dbReference>
<dbReference type="GeneID" id="386808"/>
<dbReference type="KEGG" id="dre:386808"/>
<dbReference type="AGR" id="ZFIN:ZDB-GENE-031118-31"/>
<dbReference type="CTD" id="83464"/>
<dbReference type="ZFIN" id="ZDB-GENE-031118-31">
    <property type="gene designation" value="aph1b"/>
</dbReference>
<dbReference type="eggNOG" id="KOG3972">
    <property type="taxonomic scope" value="Eukaryota"/>
</dbReference>
<dbReference type="HOGENOM" id="CLU_086389_0_0_1"/>
<dbReference type="InParanoid" id="Q8JHE9"/>
<dbReference type="OMA" id="PTYIIMF"/>
<dbReference type="OrthoDB" id="6507463at2759"/>
<dbReference type="PhylomeDB" id="Q8JHE9"/>
<dbReference type="TreeFam" id="TF314362"/>
<dbReference type="Reactome" id="R-DRE-1251985">
    <property type="pathway name" value="Nuclear signaling by ERBB4"/>
</dbReference>
<dbReference type="Reactome" id="R-DRE-193692">
    <property type="pathway name" value="Regulated proteolysis of p75NTR"/>
</dbReference>
<dbReference type="Reactome" id="R-DRE-3928665">
    <property type="pathway name" value="EPH-ephrin mediated repulsion of cells"/>
</dbReference>
<dbReference type="Reactome" id="R-DRE-9839383">
    <property type="pathway name" value="TGFBR3 PTM regulation"/>
</dbReference>
<dbReference type="PRO" id="PR:Q8JHE9"/>
<dbReference type="Proteomes" id="UP000000437">
    <property type="component" value="Alternate scaffold 7"/>
</dbReference>
<dbReference type="Proteomes" id="UP000000437">
    <property type="component" value="Chromosome 7"/>
</dbReference>
<dbReference type="Bgee" id="ENSDARG00000005612">
    <property type="expression patterns" value="Expressed in mature ovarian follicle and 28 other cell types or tissues"/>
</dbReference>
<dbReference type="GO" id="GO:0005783">
    <property type="term" value="C:endoplasmic reticulum"/>
    <property type="evidence" value="ECO:0000318"/>
    <property type="project" value="GO_Central"/>
</dbReference>
<dbReference type="GO" id="GO:0070765">
    <property type="term" value="C:gamma-secretase complex"/>
    <property type="evidence" value="ECO:0000318"/>
    <property type="project" value="GO_Central"/>
</dbReference>
<dbReference type="GO" id="GO:0030674">
    <property type="term" value="F:protein-macromolecule adaptor activity"/>
    <property type="evidence" value="ECO:0000318"/>
    <property type="project" value="GO_Central"/>
</dbReference>
<dbReference type="GO" id="GO:0007220">
    <property type="term" value="P:Notch receptor processing"/>
    <property type="evidence" value="ECO:0000318"/>
    <property type="project" value="GO_Central"/>
</dbReference>
<dbReference type="GO" id="GO:0007219">
    <property type="term" value="P:Notch signaling pathway"/>
    <property type="evidence" value="ECO:0000318"/>
    <property type="project" value="GO_Central"/>
</dbReference>
<dbReference type="GO" id="GO:0016485">
    <property type="term" value="P:protein processing"/>
    <property type="evidence" value="ECO:0000318"/>
    <property type="project" value="GO_Central"/>
</dbReference>
<dbReference type="InterPro" id="IPR009294">
    <property type="entry name" value="Aph-1"/>
</dbReference>
<dbReference type="PANTHER" id="PTHR12889">
    <property type="entry name" value="GAMMA-SECRETASE SUBUNIT APH-1"/>
    <property type="match status" value="1"/>
</dbReference>
<dbReference type="Pfam" id="PF06105">
    <property type="entry name" value="Aph-1"/>
    <property type="match status" value="1"/>
</dbReference>
<name>APH1B_DANRE</name>
<keyword id="KW-0472">Membrane</keyword>
<keyword id="KW-0914">Notch signaling pathway</keyword>
<keyword id="KW-1185">Reference proteome</keyword>
<keyword id="KW-0812">Transmembrane</keyword>
<keyword id="KW-1133">Transmembrane helix</keyword>